<sequence length="91" mass="10283">MSRSIKKGPFADAHLLKKVDEQQAAEKKQVIKTWSRRSTIFPSFVGLTIAVYDGRKHVPVFVTEDMVGHKLGEFVPTRTFRGHKADDKASK</sequence>
<organism>
    <name type="scientific">Lactobacillus delbrueckii subsp. bulgaricus (strain ATCC BAA-365 / Lb-18)</name>
    <dbReference type="NCBI Taxonomy" id="321956"/>
    <lineage>
        <taxon>Bacteria</taxon>
        <taxon>Bacillati</taxon>
        <taxon>Bacillota</taxon>
        <taxon>Bacilli</taxon>
        <taxon>Lactobacillales</taxon>
        <taxon>Lactobacillaceae</taxon>
        <taxon>Lactobacillus</taxon>
    </lineage>
</organism>
<dbReference type="EMBL" id="CP000412">
    <property type="protein sequence ID" value="ABJ58011.1"/>
    <property type="molecule type" value="Genomic_DNA"/>
</dbReference>
<dbReference type="RefSeq" id="WP_003620834.1">
    <property type="nucleotide sequence ID" value="NC_008529.1"/>
</dbReference>
<dbReference type="SMR" id="Q04C11"/>
<dbReference type="KEGG" id="lbu:LBUL_0354"/>
<dbReference type="HOGENOM" id="CLU_144911_0_1_9"/>
<dbReference type="BioCyc" id="LDEL321956:LBUL_RS01655-MONOMER"/>
<dbReference type="GO" id="GO:0005737">
    <property type="term" value="C:cytoplasm"/>
    <property type="evidence" value="ECO:0007669"/>
    <property type="project" value="UniProtKB-ARBA"/>
</dbReference>
<dbReference type="GO" id="GO:0015935">
    <property type="term" value="C:small ribosomal subunit"/>
    <property type="evidence" value="ECO:0007669"/>
    <property type="project" value="InterPro"/>
</dbReference>
<dbReference type="GO" id="GO:0019843">
    <property type="term" value="F:rRNA binding"/>
    <property type="evidence" value="ECO:0007669"/>
    <property type="project" value="UniProtKB-UniRule"/>
</dbReference>
<dbReference type="GO" id="GO:0003735">
    <property type="term" value="F:structural constituent of ribosome"/>
    <property type="evidence" value="ECO:0007669"/>
    <property type="project" value="InterPro"/>
</dbReference>
<dbReference type="GO" id="GO:0000028">
    <property type="term" value="P:ribosomal small subunit assembly"/>
    <property type="evidence" value="ECO:0007669"/>
    <property type="project" value="TreeGrafter"/>
</dbReference>
<dbReference type="GO" id="GO:0006412">
    <property type="term" value="P:translation"/>
    <property type="evidence" value="ECO:0007669"/>
    <property type="project" value="UniProtKB-UniRule"/>
</dbReference>
<dbReference type="FunFam" id="3.30.860.10:FF:000001">
    <property type="entry name" value="30S ribosomal protein S19"/>
    <property type="match status" value="1"/>
</dbReference>
<dbReference type="Gene3D" id="3.30.860.10">
    <property type="entry name" value="30s Ribosomal Protein S19, Chain A"/>
    <property type="match status" value="1"/>
</dbReference>
<dbReference type="HAMAP" id="MF_00531">
    <property type="entry name" value="Ribosomal_uS19"/>
    <property type="match status" value="1"/>
</dbReference>
<dbReference type="InterPro" id="IPR002222">
    <property type="entry name" value="Ribosomal_uS19"/>
</dbReference>
<dbReference type="InterPro" id="IPR005732">
    <property type="entry name" value="Ribosomal_uS19_bac-type"/>
</dbReference>
<dbReference type="InterPro" id="IPR020934">
    <property type="entry name" value="Ribosomal_uS19_CS"/>
</dbReference>
<dbReference type="InterPro" id="IPR023575">
    <property type="entry name" value="Ribosomal_uS19_SF"/>
</dbReference>
<dbReference type="NCBIfam" id="TIGR01050">
    <property type="entry name" value="rpsS_bact"/>
    <property type="match status" value="1"/>
</dbReference>
<dbReference type="PANTHER" id="PTHR11880">
    <property type="entry name" value="RIBOSOMAL PROTEIN S19P FAMILY MEMBER"/>
    <property type="match status" value="1"/>
</dbReference>
<dbReference type="PANTHER" id="PTHR11880:SF8">
    <property type="entry name" value="SMALL RIBOSOMAL SUBUNIT PROTEIN US19M"/>
    <property type="match status" value="1"/>
</dbReference>
<dbReference type="Pfam" id="PF00203">
    <property type="entry name" value="Ribosomal_S19"/>
    <property type="match status" value="1"/>
</dbReference>
<dbReference type="PIRSF" id="PIRSF002144">
    <property type="entry name" value="Ribosomal_S19"/>
    <property type="match status" value="1"/>
</dbReference>
<dbReference type="PRINTS" id="PR00975">
    <property type="entry name" value="RIBOSOMALS19"/>
</dbReference>
<dbReference type="SUPFAM" id="SSF54570">
    <property type="entry name" value="Ribosomal protein S19"/>
    <property type="match status" value="1"/>
</dbReference>
<dbReference type="PROSITE" id="PS00323">
    <property type="entry name" value="RIBOSOMAL_S19"/>
    <property type="match status" value="1"/>
</dbReference>
<name>RS19_LACDB</name>
<evidence type="ECO:0000255" key="1">
    <source>
        <dbReference type="HAMAP-Rule" id="MF_00531"/>
    </source>
</evidence>
<evidence type="ECO:0000305" key="2"/>
<protein>
    <recommendedName>
        <fullName evidence="1">Small ribosomal subunit protein uS19</fullName>
    </recommendedName>
    <alternativeName>
        <fullName evidence="2">30S ribosomal protein S19</fullName>
    </alternativeName>
</protein>
<gene>
    <name evidence="1" type="primary">rpsS</name>
    <name type="ordered locus">LBUL_0354</name>
</gene>
<keyword id="KW-0687">Ribonucleoprotein</keyword>
<keyword id="KW-0689">Ribosomal protein</keyword>
<keyword id="KW-0694">RNA-binding</keyword>
<keyword id="KW-0699">rRNA-binding</keyword>
<accession>Q04C11</accession>
<proteinExistence type="inferred from homology"/>
<feature type="chain" id="PRO_1000051064" description="Small ribosomal subunit protein uS19">
    <location>
        <begin position="1"/>
        <end position="91"/>
    </location>
</feature>
<reference key="1">
    <citation type="journal article" date="2006" name="Proc. Natl. Acad. Sci. U.S.A.">
        <title>Comparative genomics of the lactic acid bacteria.</title>
        <authorList>
            <person name="Makarova K.S."/>
            <person name="Slesarev A."/>
            <person name="Wolf Y.I."/>
            <person name="Sorokin A."/>
            <person name="Mirkin B."/>
            <person name="Koonin E.V."/>
            <person name="Pavlov A."/>
            <person name="Pavlova N."/>
            <person name="Karamychev V."/>
            <person name="Polouchine N."/>
            <person name="Shakhova V."/>
            <person name="Grigoriev I."/>
            <person name="Lou Y."/>
            <person name="Rohksar D."/>
            <person name="Lucas S."/>
            <person name="Huang K."/>
            <person name="Goodstein D.M."/>
            <person name="Hawkins T."/>
            <person name="Plengvidhya V."/>
            <person name="Welker D."/>
            <person name="Hughes J."/>
            <person name="Goh Y."/>
            <person name="Benson A."/>
            <person name="Baldwin K."/>
            <person name="Lee J.-H."/>
            <person name="Diaz-Muniz I."/>
            <person name="Dosti B."/>
            <person name="Smeianov V."/>
            <person name="Wechter W."/>
            <person name="Barabote R."/>
            <person name="Lorca G."/>
            <person name="Altermann E."/>
            <person name="Barrangou R."/>
            <person name="Ganesan B."/>
            <person name="Xie Y."/>
            <person name="Rawsthorne H."/>
            <person name="Tamir D."/>
            <person name="Parker C."/>
            <person name="Breidt F."/>
            <person name="Broadbent J.R."/>
            <person name="Hutkins R."/>
            <person name="O'Sullivan D."/>
            <person name="Steele J."/>
            <person name="Unlu G."/>
            <person name="Saier M.H. Jr."/>
            <person name="Klaenhammer T."/>
            <person name="Richardson P."/>
            <person name="Kozyavkin S."/>
            <person name="Weimer B.C."/>
            <person name="Mills D.A."/>
        </authorList>
    </citation>
    <scope>NUCLEOTIDE SEQUENCE [LARGE SCALE GENOMIC DNA]</scope>
    <source>
        <strain>ATCC BAA-365 / Lb-18</strain>
    </source>
</reference>
<comment type="function">
    <text evidence="1">Protein S19 forms a complex with S13 that binds strongly to the 16S ribosomal RNA.</text>
</comment>
<comment type="similarity">
    <text evidence="1">Belongs to the universal ribosomal protein uS19 family.</text>
</comment>